<keyword id="KW-0067">ATP-binding</keyword>
<keyword id="KW-0963">Cytoplasm</keyword>
<keyword id="KW-0436">Ligase</keyword>
<keyword id="KW-0547">Nucleotide-binding</keyword>
<keyword id="KW-0658">Purine biosynthesis</keyword>
<keyword id="KW-1185">Reference proteome</keyword>
<gene>
    <name evidence="1" type="primary">purM</name>
    <name type="ordered locus">LBA1554</name>
</gene>
<dbReference type="EC" id="6.3.3.1" evidence="1"/>
<dbReference type="EMBL" id="CP000033">
    <property type="protein sequence ID" value="AAV43371.1"/>
    <property type="molecule type" value="Genomic_DNA"/>
</dbReference>
<dbReference type="RefSeq" id="WP_011254495.1">
    <property type="nucleotide sequence ID" value="NC_006814.3"/>
</dbReference>
<dbReference type="RefSeq" id="YP_194402.1">
    <property type="nucleotide sequence ID" value="NC_006814.3"/>
</dbReference>
<dbReference type="SMR" id="Q5FIV3"/>
<dbReference type="STRING" id="272621.LBA1554"/>
<dbReference type="GeneID" id="93289380"/>
<dbReference type="KEGG" id="lac:LBA1554"/>
<dbReference type="PATRIC" id="fig|272621.13.peg.1476"/>
<dbReference type="eggNOG" id="COG0150">
    <property type="taxonomic scope" value="Bacteria"/>
</dbReference>
<dbReference type="HOGENOM" id="CLU_047116_0_0_9"/>
<dbReference type="OrthoDB" id="9802507at2"/>
<dbReference type="BioCyc" id="LACI272621:G1G49-1519-MONOMER"/>
<dbReference type="UniPathway" id="UPA00074">
    <property type="reaction ID" value="UER00129"/>
</dbReference>
<dbReference type="Proteomes" id="UP000006381">
    <property type="component" value="Chromosome"/>
</dbReference>
<dbReference type="GO" id="GO:0005829">
    <property type="term" value="C:cytosol"/>
    <property type="evidence" value="ECO:0007669"/>
    <property type="project" value="TreeGrafter"/>
</dbReference>
<dbReference type="GO" id="GO:0005524">
    <property type="term" value="F:ATP binding"/>
    <property type="evidence" value="ECO:0007669"/>
    <property type="project" value="UniProtKB-KW"/>
</dbReference>
<dbReference type="GO" id="GO:0004637">
    <property type="term" value="F:phosphoribosylamine-glycine ligase activity"/>
    <property type="evidence" value="ECO:0007669"/>
    <property type="project" value="TreeGrafter"/>
</dbReference>
<dbReference type="GO" id="GO:0004641">
    <property type="term" value="F:phosphoribosylformylglycinamidine cyclo-ligase activity"/>
    <property type="evidence" value="ECO:0007669"/>
    <property type="project" value="UniProtKB-UniRule"/>
</dbReference>
<dbReference type="GO" id="GO:0006189">
    <property type="term" value="P:'de novo' IMP biosynthetic process"/>
    <property type="evidence" value="ECO:0007669"/>
    <property type="project" value="UniProtKB-UniRule"/>
</dbReference>
<dbReference type="GO" id="GO:0046084">
    <property type="term" value="P:adenine biosynthetic process"/>
    <property type="evidence" value="ECO:0007669"/>
    <property type="project" value="TreeGrafter"/>
</dbReference>
<dbReference type="CDD" id="cd02196">
    <property type="entry name" value="PurM"/>
    <property type="match status" value="1"/>
</dbReference>
<dbReference type="FunFam" id="3.30.1330.10:FF:000001">
    <property type="entry name" value="Phosphoribosylformylglycinamidine cyclo-ligase"/>
    <property type="match status" value="1"/>
</dbReference>
<dbReference type="FunFam" id="3.90.650.10:FF:000011">
    <property type="entry name" value="Phosphoribosylformylglycinamidine cyclo-ligase"/>
    <property type="match status" value="1"/>
</dbReference>
<dbReference type="Gene3D" id="3.90.650.10">
    <property type="entry name" value="PurM-like C-terminal domain"/>
    <property type="match status" value="1"/>
</dbReference>
<dbReference type="Gene3D" id="3.30.1330.10">
    <property type="entry name" value="PurM-like, N-terminal domain"/>
    <property type="match status" value="1"/>
</dbReference>
<dbReference type="HAMAP" id="MF_00741">
    <property type="entry name" value="AIRS"/>
    <property type="match status" value="1"/>
</dbReference>
<dbReference type="InterPro" id="IPR010918">
    <property type="entry name" value="PurM-like_C_dom"/>
</dbReference>
<dbReference type="InterPro" id="IPR036676">
    <property type="entry name" value="PurM-like_C_sf"/>
</dbReference>
<dbReference type="InterPro" id="IPR016188">
    <property type="entry name" value="PurM-like_N"/>
</dbReference>
<dbReference type="InterPro" id="IPR036921">
    <property type="entry name" value="PurM-like_N_sf"/>
</dbReference>
<dbReference type="InterPro" id="IPR004733">
    <property type="entry name" value="PurM_cligase"/>
</dbReference>
<dbReference type="NCBIfam" id="TIGR00878">
    <property type="entry name" value="purM"/>
    <property type="match status" value="1"/>
</dbReference>
<dbReference type="PANTHER" id="PTHR10520:SF12">
    <property type="entry name" value="TRIFUNCTIONAL PURINE BIOSYNTHETIC PROTEIN ADENOSINE-3"/>
    <property type="match status" value="1"/>
</dbReference>
<dbReference type="PANTHER" id="PTHR10520">
    <property type="entry name" value="TRIFUNCTIONAL PURINE BIOSYNTHETIC PROTEIN ADENOSINE-3-RELATED"/>
    <property type="match status" value="1"/>
</dbReference>
<dbReference type="Pfam" id="PF00586">
    <property type="entry name" value="AIRS"/>
    <property type="match status" value="1"/>
</dbReference>
<dbReference type="Pfam" id="PF02769">
    <property type="entry name" value="AIRS_C"/>
    <property type="match status" value="1"/>
</dbReference>
<dbReference type="SUPFAM" id="SSF56042">
    <property type="entry name" value="PurM C-terminal domain-like"/>
    <property type="match status" value="1"/>
</dbReference>
<dbReference type="SUPFAM" id="SSF55326">
    <property type="entry name" value="PurM N-terminal domain-like"/>
    <property type="match status" value="1"/>
</dbReference>
<accession>Q5FIV3</accession>
<proteinExistence type="inferred from homology"/>
<feature type="chain" id="PRO_0000258363" description="Phosphoribosylformylglycinamidine cyclo-ligase">
    <location>
        <begin position="1"/>
        <end position="345"/>
    </location>
</feature>
<organism>
    <name type="scientific">Lactobacillus acidophilus (strain ATCC 700396 / NCK56 / N2 / NCFM)</name>
    <dbReference type="NCBI Taxonomy" id="272621"/>
    <lineage>
        <taxon>Bacteria</taxon>
        <taxon>Bacillati</taxon>
        <taxon>Bacillota</taxon>
        <taxon>Bacilli</taxon>
        <taxon>Lactobacillales</taxon>
        <taxon>Lactobacillaceae</taxon>
        <taxon>Lactobacillus</taxon>
    </lineage>
</organism>
<evidence type="ECO:0000255" key="1">
    <source>
        <dbReference type="HAMAP-Rule" id="MF_00741"/>
    </source>
</evidence>
<reference key="1">
    <citation type="journal article" date="2005" name="Proc. Natl. Acad. Sci. U.S.A.">
        <title>Complete genome sequence of the probiotic lactic acid bacterium Lactobacillus acidophilus NCFM.</title>
        <authorList>
            <person name="Altermann E."/>
            <person name="Russell W.M."/>
            <person name="Azcarate-Peril M.A."/>
            <person name="Barrangou R."/>
            <person name="Buck B.L."/>
            <person name="McAuliffe O."/>
            <person name="Souther N."/>
            <person name="Dobson A."/>
            <person name="Duong T."/>
            <person name="Callanan M."/>
            <person name="Lick S."/>
            <person name="Hamrick A."/>
            <person name="Cano R."/>
            <person name="Klaenhammer T.R."/>
        </authorList>
    </citation>
    <scope>NUCLEOTIDE SEQUENCE [LARGE SCALE GENOMIC DNA]</scope>
    <source>
        <strain>ATCC 700396 / NCK56 / N2 / NCFM</strain>
    </source>
</reference>
<protein>
    <recommendedName>
        <fullName evidence="1">Phosphoribosylformylglycinamidine cyclo-ligase</fullName>
        <ecNumber evidence="1">6.3.3.1</ecNumber>
    </recommendedName>
    <alternativeName>
        <fullName evidence="1">AIR synthase</fullName>
    </alternativeName>
    <alternativeName>
        <fullName evidence="1">AIRS</fullName>
    </alternativeName>
    <alternativeName>
        <fullName evidence="1">Phosphoribosyl-aminoimidazole synthetase</fullName>
    </alternativeName>
</protein>
<sequence length="345" mass="37151">MNRYKEAGVDVTAGYDLVNRIKPLVAATKRKGVMGSIGSFGGMFDLEELGYKHPVLVSGTDGVGTKLMIAQKMHKNDTVGIDCVAMCVNDVLAQGAEPLFFLDYIACGHNDPERLADVVKGVAEGCKQSGSALIGGETAEMPDMYEPHEYDLAGFSTGIAEKEDLLSSSLAKAGDHLIALPSSGVHSNGFSLIRKILFKDHDVSLDDKPAELSGKTVGETLLTPTRIYIKAVLPLVKKHLIHGIAHITGGGFIENLPRIYDDNLQAVINKGSWPGLPIFDYLKKIGVLSDQDCYNTFNMGIGLVLAVSSENVDAVKEQLNTENEEFYEIGKLTARPAGKAKIVIE</sequence>
<name>PUR5_LACAC</name>
<comment type="catalytic activity">
    <reaction evidence="1">
        <text>2-formamido-N(1)-(5-O-phospho-beta-D-ribosyl)acetamidine + ATP = 5-amino-1-(5-phospho-beta-D-ribosyl)imidazole + ADP + phosphate + H(+)</text>
        <dbReference type="Rhea" id="RHEA:23032"/>
        <dbReference type="ChEBI" id="CHEBI:15378"/>
        <dbReference type="ChEBI" id="CHEBI:30616"/>
        <dbReference type="ChEBI" id="CHEBI:43474"/>
        <dbReference type="ChEBI" id="CHEBI:137981"/>
        <dbReference type="ChEBI" id="CHEBI:147287"/>
        <dbReference type="ChEBI" id="CHEBI:456216"/>
        <dbReference type="EC" id="6.3.3.1"/>
    </reaction>
</comment>
<comment type="pathway">
    <text evidence="1">Purine metabolism; IMP biosynthesis via de novo pathway; 5-amino-1-(5-phospho-D-ribosyl)imidazole from N(2)-formyl-N(1)-(5-phospho-D-ribosyl)glycinamide: step 2/2.</text>
</comment>
<comment type="subcellular location">
    <subcellularLocation>
        <location evidence="1">Cytoplasm</location>
    </subcellularLocation>
</comment>
<comment type="similarity">
    <text evidence="1">Belongs to the AIR synthase family.</text>
</comment>